<dbReference type="EC" id="5.1.3.5"/>
<dbReference type="EMBL" id="AB017065">
    <property type="protein sequence ID" value="BAB09155.1"/>
    <property type="molecule type" value="Genomic_DNA"/>
</dbReference>
<dbReference type="EMBL" id="CP002688">
    <property type="protein sequence ID" value="AED95113.1"/>
    <property type="molecule type" value="Genomic_DNA"/>
</dbReference>
<dbReference type="RefSeq" id="NP_199261.1">
    <property type="nucleotide sequence ID" value="NM_123815.1"/>
</dbReference>
<dbReference type="SMR" id="Q9FI17"/>
<dbReference type="FunCoup" id="Q9FI17">
    <property type="interactions" value="140"/>
</dbReference>
<dbReference type="STRING" id="3702.Q9FI17"/>
<dbReference type="PaxDb" id="3702-AT5G44480.1"/>
<dbReference type="EnsemblPlants" id="AT5G44480.1">
    <property type="protein sequence ID" value="AT5G44480.1"/>
    <property type="gene ID" value="AT5G44480"/>
</dbReference>
<dbReference type="GeneID" id="834475"/>
<dbReference type="Gramene" id="AT5G44480.1">
    <property type="protein sequence ID" value="AT5G44480.1"/>
    <property type="gene ID" value="AT5G44480"/>
</dbReference>
<dbReference type="KEGG" id="ath:AT5G44480"/>
<dbReference type="Araport" id="AT5G44480"/>
<dbReference type="TAIR" id="AT5G44480">
    <property type="gene designation" value="DUR"/>
</dbReference>
<dbReference type="eggNOG" id="KOG1371">
    <property type="taxonomic scope" value="Eukaryota"/>
</dbReference>
<dbReference type="HOGENOM" id="CLU_007383_1_10_1"/>
<dbReference type="InParanoid" id="Q9FI17"/>
<dbReference type="PhylomeDB" id="Q9FI17"/>
<dbReference type="BioCyc" id="ARA:AT5G44480-MONOMER"/>
<dbReference type="BRENDA" id="5.1.3.5">
    <property type="organism ID" value="399"/>
</dbReference>
<dbReference type="UniPathway" id="UPA00797">
    <property type="reaction ID" value="UER00772"/>
</dbReference>
<dbReference type="UniPathway" id="UPA00963"/>
<dbReference type="PRO" id="PR:Q9FI17"/>
<dbReference type="Proteomes" id="UP000006548">
    <property type="component" value="Chromosome 5"/>
</dbReference>
<dbReference type="ExpressionAtlas" id="Q9FI17">
    <property type="expression patterns" value="baseline and differential"/>
</dbReference>
<dbReference type="GO" id="GO:0032580">
    <property type="term" value="C:Golgi cisterna membrane"/>
    <property type="evidence" value="ECO:0007669"/>
    <property type="project" value="UniProtKB-SubCell"/>
</dbReference>
<dbReference type="GO" id="GO:0050373">
    <property type="term" value="F:UDP-arabinose 4-epimerase activity"/>
    <property type="evidence" value="ECO:0007669"/>
    <property type="project" value="UniProtKB-EC"/>
</dbReference>
<dbReference type="GO" id="GO:0003978">
    <property type="term" value="F:UDP-glucose 4-epimerase activity"/>
    <property type="evidence" value="ECO:0007669"/>
    <property type="project" value="InterPro"/>
</dbReference>
<dbReference type="GO" id="GO:0045227">
    <property type="term" value="P:capsule polysaccharide biosynthetic process"/>
    <property type="evidence" value="ECO:0007669"/>
    <property type="project" value="UniProtKB-UniPathway"/>
</dbReference>
<dbReference type="GO" id="GO:0006012">
    <property type="term" value="P:galactose metabolic process"/>
    <property type="evidence" value="ECO:0007669"/>
    <property type="project" value="InterPro"/>
</dbReference>
<dbReference type="GO" id="GO:0033358">
    <property type="term" value="P:UDP-L-arabinose biosynthetic process"/>
    <property type="evidence" value="ECO:0007669"/>
    <property type="project" value="UniProtKB-UniPathway"/>
</dbReference>
<dbReference type="CDD" id="cd05247">
    <property type="entry name" value="UDP_G4E_1_SDR_e"/>
    <property type="match status" value="1"/>
</dbReference>
<dbReference type="Gene3D" id="3.40.50.720">
    <property type="entry name" value="NAD(P)-binding Rossmann-like Domain"/>
    <property type="match status" value="1"/>
</dbReference>
<dbReference type="Gene3D" id="3.90.25.10">
    <property type="entry name" value="UDP-galactose 4-epimerase, domain 1"/>
    <property type="match status" value="1"/>
</dbReference>
<dbReference type="InterPro" id="IPR016040">
    <property type="entry name" value="NAD(P)-bd_dom"/>
</dbReference>
<dbReference type="InterPro" id="IPR036291">
    <property type="entry name" value="NAD(P)-bd_dom_sf"/>
</dbReference>
<dbReference type="InterPro" id="IPR005886">
    <property type="entry name" value="UDP_G4E"/>
</dbReference>
<dbReference type="NCBIfam" id="TIGR01179">
    <property type="entry name" value="galE"/>
    <property type="match status" value="1"/>
</dbReference>
<dbReference type="PANTHER" id="PTHR43725:SF36">
    <property type="entry name" value="UDP-ARABINOSE 4-EPIMERASE 4-RELATED"/>
    <property type="match status" value="1"/>
</dbReference>
<dbReference type="PANTHER" id="PTHR43725">
    <property type="entry name" value="UDP-GLUCOSE 4-EPIMERASE"/>
    <property type="match status" value="1"/>
</dbReference>
<dbReference type="Pfam" id="PF16363">
    <property type="entry name" value="GDP_Man_Dehyd"/>
    <property type="match status" value="1"/>
</dbReference>
<dbReference type="SUPFAM" id="SSF51735">
    <property type="entry name" value="NAD(P)-binding Rossmann-fold domains"/>
    <property type="match status" value="1"/>
</dbReference>
<feature type="chain" id="PRO_0000183232" description="Putative UDP-arabinose 4-epimerase 4">
    <location>
        <begin position="1"/>
        <end position="436"/>
    </location>
</feature>
<feature type="topological domain" description="Cytoplasmic" evidence="2">
    <location>
        <begin position="1"/>
        <end position="60"/>
    </location>
</feature>
<feature type="transmembrane region" description="Helical; Signal-anchor for type II membrane protein" evidence="2">
    <location>
        <begin position="61"/>
        <end position="81"/>
    </location>
</feature>
<feature type="topological domain" description="Lumenal" evidence="2">
    <location>
        <begin position="82"/>
        <end position="436"/>
    </location>
</feature>
<feature type="region of interest" description="Disordered" evidence="3">
    <location>
        <begin position="1"/>
        <end position="20"/>
    </location>
</feature>
<feature type="active site" description="Proton acceptor" evidence="1">
    <location>
        <position position="244"/>
    </location>
</feature>
<feature type="binding site" evidence="1">
    <location>
        <begin position="96"/>
        <end position="127"/>
    </location>
    <ligand>
        <name>NAD(+)</name>
        <dbReference type="ChEBI" id="CHEBI:57540"/>
    </ligand>
</feature>
<sequence length="436" mass="48345">MLNSSGVRTQRRSPRPLSLGGRKIITPTKFAYDHHNPDKVLDFVEMDCLEPKTKNNLTGKLLLVASLLILAIIVISQSSSFTSPSAFSQREEGVTHVLVTGGAGYIGSHAALRLLRDSYRVTIVDNLSRGNLGAVKTLQQLFPQTGRLQFIYADLGDPLAVEKIFSENAFDAVMHFAAVAYVGESTLYPLKYYHNITSNTLGVLEAMARHKVKKLIYSSTCATYGEPEKMPITEDTPQVPINPYGKAKKMAEDMILDFSKNSDMAVMILRYFNVIGSDPGGRLGEAPRPELREQGRISGACFDAARGFIPGLQVKGTDYKTSDGTCIRDYIDVTDLVDAHVKALEKAQPRKVGIYNVGTGKGRSVKEFVEACKKATGVEIKVDFLPRRPGDYAEVYSDPTKILKDLNWTARFTNLQDSLQVAWRWQKIHPHGYNSY</sequence>
<reference key="1">
    <citation type="journal article" date="1999" name="DNA Res.">
        <title>Structural analysis of Arabidopsis thaliana chromosome 5. IX. Sequence features of the regions of 1,011,550 bp covered by seventeen P1 and TAC clones.</title>
        <authorList>
            <person name="Kaneko T."/>
            <person name="Katoh T."/>
            <person name="Sato S."/>
            <person name="Nakamura Y."/>
            <person name="Asamizu E."/>
            <person name="Kotani H."/>
            <person name="Miyajima N."/>
            <person name="Tabata S."/>
        </authorList>
    </citation>
    <scope>NUCLEOTIDE SEQUENCE [LARGE SCALE GENOMIC DNA]</scope>
    <source>
        <strain>cv. Columbia</strain>
    </source>
</reference>
<reference key="2">
    <citation type="journal article" date="2017" name="Plant J.">
        <title>Araport11: a complete reannotation of the Arabidopsis thaliana reference genome.</title>
        <authorList>
            <person name="Cheng C.Y."/>
            <person name="Krishnakumar V."/>
            <person name="Chan A.P."/>
            <person name="Thibaud-Nissen F."/>
            <person name="Schobel S."/>
            <person name="Town C.D."/>
        </authorList>
    </citation>
    <scope>GENOME REANNOTATION</scope>
    <source>
        <strain>cv. Columbia</strain>
    </source>
</reference>
<comment type="catalytic activity">
    <reaction>
        <text>UDP-beta-L-arabinopyranose = UDP-alpha-D-xylose</text>
        <dbReference type="Rhea" id="RHEA:11320"/>
        <dbReference type="ChEBI" id="CHEBI:57632"/>
        <dbReference type="ChEBI" id="CHEBI:61457"/>
        <dbReference type="EC" id="5.1.3.5"/>
    </reaction>
</comment>
<comment type="cofactor">
    <cofactor evidence="1">
        <name>NAD(+)</name>
        <dbReference type="ChEBI" id="CHEBI:57540"/>
    </cofactor>
</comment>
<comment type="pathway">
    <text>Nucleotide-sugar biosynthesis; UDP-L-arabinose biosynthesis; UDP-L-arabinose from UDP-alpha-D-xylose: step 1/1.</text>
</comment>
<comment type="pathway">
    <text>Cell wall biogenesis; cell wall polysaccharide biosynthesis.</text>
</comment>
<comment type="subcellular location">
    <subcellularLocation>
        <location evidence="4">Golgi apparatus</location>
        <location evidence="4">Golgi stack membrane</location>
        <topology evidence="4">Single-pass type II membrane protein</topology>
    </subcellularLocation>
</comment>
<comment type="similarity">
    <text evidence="4">Belongs to the NAD(P)-dependent epimerase/dehydratase family.</text>
</comment>
<name>ARAE4_ARATH</name>
<accession>Q9FI17</accession>
<organism>
    <name type="scientific">Arabidopsis thaliana</name>
    <name type="common">Mouse-ear cress</name>
    <dbReference type="NCBI Taxonomy" id="3702"/>
    <lineage>
        <taxon>Eukaryota</taxon>
        <taxon>Viridiplantae</taxon>
        <taxon>Streptophyta</taxon>
        <taxon>Embryophyta</taxon>
        <taxon>Tracheophyta</taxon>
        <taxon>Spermatophyta</taxon>
        <taxon>Magnoliopsida</taxon>
        <taxon>eudicotyledons</taxon>
        <taxon>Gunneridae</taxon>
        <taxon>Pentapetalae</taxon>
        <taxon>rosids</taxon>
        <taxon>malvids</taxon>
        <taxon>Brassicales</taxon>
        <taxon>Brassicaceae</taxon>
        <taxon>Camelineae</taxon>
        <taxon>Arabidopsis</taxon>
    </lineage>
</organism>
<gene>
    <name type="ordered locus">At5g44480</name>
    <name type="ORF">MFC16.15</name>
</gene>
<evidence type="ECO:0000250" key="1"/>
<evidence type="ECO:0000255" key="2"/>
<evidence type="ECO:0000256" key="3">
    <source>
        <dbReference type="SAM" id="MobiDB-lite"/>
    </source>
</evidence>
<evidence type="ECO:0000305" key="4"/>
<protein>
    <recommendedName>
        <fullName>Putative UDP-arabinose 4-epimerase 4</fullName>
        <ecNumber>5.1.3.5</ecNumber>
    </recommendedName>
    <alternativeName>
        <fullName>UDP-D-xylose 4-epimerase 4</fullName>
    </alternativeName>
</protein>
<keyword id="KW-0119">Carbohydrate metabolism</keyword>
<keyword id="KW-0333">Golgi apparatus</keyword>
<keyword id="KW-0413">Isomerase</keyword>
<keyword id="KW-0472">Membrane</keyword>
<keyword id="KW-0520">NAD</keyword>
<keyword id="KW-1185">Reference proteome</keyword>
<keyword id="KW-0735">Signal-anchor</keyword>
<keyword id="KW-0812">Transmembrane</keyword>
<keyword id="KW-1133">Transmembrane helix</keyword>
<proteinExistence type="inferred from homology"/>